<reference key="1">
    <citation type="journal article" date="2001" name="Nature">
        <title>Genome sequence of enterohaemorrhagic Escherichia coli O157:H7.</title>
        <authorList>
            <person name="Perna N.T."/>
            <person name="Plunkett G. III"/>
            <person name="Burland V."/>
            <person name="Mau B."/>
            <person name="Glasner J.D."/>
            <person name="Rose D.J."/>
            <person name="Mayhew G.F."/>
            <person name="Evans P.S."/>
            <person name="Gregor J."/>
            <person name="Kirkpatrick H.A."/>
            <person name="Posfai G."/>
            <person name="Hackett J."/>
            <person name="Klink S."/>
            <person name="Boutin A."/>
            <person name="Shao Y."/>
            <person name="Miller L."/>
            <person name="Grotbeck E.J."/>
            <person name="Davis N.W."/>
            <person name="Lim A."/>
            <person name="Dimalanta E.T."/>
            <person name="Potamousis K."/>
            <person name="Apodaca J."/>
            <person name="Anantharaman T.S."/>
            <person name="Lin J."/>
            <person name="Yen G."/>
            <person name="Schwartz D.C."/>
            <person name="Welch R.A."/>
            <person name="Blattner F.R."/>
        </authorList>
    </citation>
    <scope>NUCLEOTIDE SEQUENCE [LARGE SCALE GENOMIC DNA]</scope>
    <source>
        <strain>O157:H7 / EDL933 / ATCC 700927 / EHEC</strain>
    </source>
</reference>
<reference key="2">
    <citation type="journal article" date="2001" name="DNA Res.">
        <title>Complete genome sequence of enterohemorrhagic Escherichia coli O157:H7 and genomic comparison with a laboratory strain K-12.</title>
        <authorList>
            <person name="Hayashi T."/>
            <person name="Makino K."/>
            <person name="Ohnishi M."/>
            <person name="Kurokawa K."/>
            <person name="Ishii K."/>
            <person name="Yokoyama K."/>
            <person name="Han C.-G."/>
            <person name="Ohtsubo E."/>
            <person name="Nakayama K."/>
            <person name="Murata T."/>
            <person name="Tanaka M."/>
            <person name="Tobe T."/>
            <person name="Iida T."/>
            <person name="Takami H."/>
            <person name="Honda T."/>
            <person name="Sasakawa C."/>
            <person name="Ogasawara N."/>
            <person name="Yasunaga T."/>
            <person name="Kuhara S."/>
            <person name="Shiba T."/>
            <person name="Hattori M."/>
            <person name="Shinagawa H."/>
        </authorList>
    </citation>
    <scope>NUCLEOTIDE SEQUENCE [LARGE SCALE GENOMIC DNA]</scope>
    <source>
        <strain>O157:H7 / Sakai / RIMD 0509952 / EHEC</strain>
    </source>
</reference>
<feature type="chain" id="PRO_0000193047" description="Bifunctional protein Aas">
    <location>
        <begin position="1"/>
        <end position="719"/>
    </location>
</feature>
<feature type="transmembrane region" description="Helical" evidence="1">
    <location>
        <begin position="258"/>
        <end position="277"/>
    </location>
</feature>
<feature type="transmembrane region" description="Helical" evidence="1">
    <location>
        <begin position="409"/>
        <end position="433"/>
    </location>
</feature>
<feature type="region of interest" description="Acyltransferase">
    <location>
        <begin position="15"/>
        <end position="138"/>
    </location>
</feature>
<feature type="region of interest" description="AMP-binding">
    <location>
        <begin position="233"/>
        <end position="646"/>
    </location>
</feature>
<feature type="active site" evidence="1">
    <location>
        <position position="36"/>
    </location>
</feature>
<name>AAS_ECO57</name>
<protein>
    <recommendedName>
        <fullName evidence="1">Bifunctional protein Aas</fullName>
    </recommendedName>
    <domain>
        <recommendedName>
            <fullName evidence="1">2-acylglycerophosphoethanolamine acyltransferase</fullName>
            <ecNumber evidence="1">2.3.1.40</ecNumber>
        </recommendedName>
        <alternativeName>
            <fullName evidence="1">2-acyl-GPE acyltransferase</fullName>
        </alternativeName>
        <alternativeName>
            <fullName evidence="1">Acyl-[acyl-carrier-protein]--phospholipid O-acyltransferase</fullName>
        </alternativeName>
    </domain>
    <domain>
        <recommendedName>
            <fullName evidence="1">Acyl-[acyl-carrier-protein] synthetase</fullName>
            <ecNumber evidence="1">6.2.1.20</ecNumber>
        </recommendedName>
        <alternativeName>
            <fullName evidence="1">Acyl-ACP synthetase</fullName>
        </alternativeName>
        <alternativeName>
            <fullName evidence="1">Long-chain-fatty-acid--[acyl-carrier-protein] ligase</fullName>
        </alternativeName>
    </domain>
</protein>
<proteinExistence type="inferred from homology"/>
<comment type="function">
    <text evidence="1">Plays a role in lysophospholipid acylation. Transfers fatty acids to the 1-position via an enzyme-bound acyl-ACP intermediate in the presence of ATP and magnesium. Its physiological function is to regenerate phosphatidylethanolamine from 2-acyl-glycero-3-phosphoethanolamine (2-acyl-GPE) formed by transacylation reactions or degradation by phospholipase A1.</text>
</comment>
<comment type="catalytic activity">
    <reaction evidence="1">
        <text>a 2-acyl-sn-glycero-3-phosphoethanolamine + a fatty acyl-[ACP] = a 1,2-diacyl-sn-glycero-3-phosphoethanolamine + holo-[ACP]</text>
        <dbReference type="Rhea" id="RHEA:10304"/>
        <dbReference type="Rhea" id="RHEA-COMP:9685"/>
        <dbReference type="Rhea" id="RHEA-COMP:14125"/>
        <dbReference type="ChEBI" id="CHEBI:64479"/>
        <dbReference type="ChEBI" id="CHEBI:64612"/>
        <dbReference type="ChEBI" id="CHEBI:65213"/>
        <dbReference type="ChEBI" id="CHEBI:138651"/>
        <dbReference type="EC" id="2.3.1.40"/>
    </reaction>
</comment>
<comment type="catalytic activity">
    <reaction evidence="1">
        <text>a long-chain fatty acid + holo-[ACP] + ATP = a long-chain fatty acyl-[ACP] + AMP + diphosphate</text>
        <dbReference type="Rhea" id="RHEA:45588"/>
        <dbReference type="Rhea" id="RHEA-COMP:9685"/>
        <dbReference type="Rhea" id="RHEA-COMP:12682"/>
        <dbReference type="ChEBI" id="CHEBI:30616"/>
        <dbReference type="ChEBI" id="CHEBI:33019"/>
        <dbReference type="ChEBI" id="CHEBI:57560"/>
        <dbReference type="ChEBI" id="CHEBI:64479"/>
        <dbReference type="ChEBI" id="CHEBI:133243"/>
        <dbReference type="ChEBI" id="CHEBI:456215"/>
        <dbReference type="EC" id="6.2.1.20"/>
    </reaction>
</comment>
<comment type="subcellular location">
    <subcellularLocation>
        <location evidence="1">Cell inner membrane</location>
        <topology evidence="1">Multi-pass membrane protein</topology>
    </subcellularLocation>
</comment>
<comment type="similarity">
    <text evidence="1">In the N-terminal section; belongs to the 2-acyl-GPE acetyltransferase family.</text>
</comment>
<comment type="similarity">
    <text evidence="1">In the C-terminal section; belongs to the ATP-dependent AMP-binding enzyme family.</text>
</comment>
<evidence type="ECO:0000255" key="1">
    <source>
        <dbReference type="HAMAP-Rule" id="MF_01162"/>
    </source>
</evidence>
<accession>Q8X6J8</accession>
<accession>Q7AB50</accession>
<organism>
    <name type="scientific">Escherichia coli O157:H7</name>
    <dbReference type="NCBI Taxonomy" id="83334"/>
    <lineage>
        <taxon>Bacteria</taxon>
        <taxon>Pseudomonadati</taxon>
        <taxon>Pseudomonadota</taxon>
        <taxon>Gammaproteobacteria</taxon>
        <taxon>Enterobacterales</taxon>
        <taxon>Enterobacteriaceae</taxon>
        <taxon>Escherichia</taxon>
    </lineage>
</organism>
<gene>
    <name evidence="1" type="primary">aas</name>
    <name type="ordered locus">Z4154</name>
    <name type="ordered locus">ECs3693</name>
</gene>
<sequence>MLFSFFRNLCRVLYRVRVTGDPQALKGERVLITPNHVSFIDGILLGLFLPVRPVFAVYTSISQQWYMRWLKSFIDFVPLDPTQPMAIKHLVRLVEQGRPVVIFPEGRITTTGSLMKIYDGAGFVAAKSGATVIPVRIEGAELTHFSRLKGLVKRRLFPQITLHILPPTQVEMPDAPRARDRRKIAGEMLHQIMMEARMAVRPRETLYESLLSAMYRFGAGKKCVEDVNFTPDSYRKLLTKTLFVGRILEKYSVEGERIGLMLPNAGISAAVIFGAIARRRIPAMMNYTAGVKGLTSAITAAEIKTIFTSRQFLDKGKLWHLPEQLTQVRWVYLEDLKADVTTADKVWIFAHLLMPRLAQVKQQPEEEALILFTSGSEGHPKGVVHSHKSILANVEQIKTIADFTTNDRFMSALPLFHSFGLTVGLFTPLLTGAEVFLYPSPLHYRIVPELVYDRSCTVLFGTSTFLGHYARFANPYDFYRLRYVVAGAEKLQESTKQLWQDKFGLRILEGYGVTECAPVVSINVPMAAKPGTVGRILPGMDARLLSVPGIEEGGRLQLKGPNIMNGYLRVEKPGVLEVPTAENVRGEMERGWYDTGDIVRFDEQGFVQIQGRAKRFAKIAGEMVSLEMVEQLALGVSPDKVHATAIKSDASKGEALVLFTTDNELTRDKLQQYAREHGVPELAVPRDIRYLKQMPLLGSGKPDFVTLKSWVDEVEQHDE</sequence>
<dbReference type="EC" id="2.3.1.40" evidence="1"/>
<dbReference type="EC" id="6.2.1.20" evidence="1"/>
<dbReference type="EMBL" id="AE005174">
    <property type="protein sequence ID" value="AAG57948.1"/>
    <property type="molecule type" value="Genomic_DNA"/>
</dbReference>
<dbReference type="EMBL" id="BA000007">
    <property type="protein sequence ID" value="BAB37116.1"/>
    <property type="molecule type" value="Genomic_DNA"/>
</dbReference>
<dbReference type="PIR" id="E91090">
    <property type="entry name" value="E91090"/>
</dbReference>
<dbReference type="PIR" id="H85935">
    <property type="entry name" value="H85935"/>
</dbReference>
<dbReference type="RefSeq" id="NP_311720.1">
    <property type="nucleotide sequence ID" value="NC_002695.1"/>
</dbReference>
<dbReference type="RefSeq" id="WP_000899007.1">
    <property type="nucleotide sequence ID" value="NZ_SEKU01000002.1"/>
</dbReference>
<dbReference type="SMR" id="Q8X6J8"/>
<dbReference type="STRING" id="155864.Z4154"/>
<dbReference type="GeneID" id="916493"/>
<dbReference type="KEGG" id="ece:Z4154"/>
<dbReference type="KEGG" id="ecs:ECs_3693"/>
<dbReference type="PATRIC" id="fig|386585.9.peg.3860"/>
<dbReference type="eggNOG" id="COG0204">
    <property type="taxonomic scope" value="Bacteria"/>
</dbReference>
<dbReference type="eggNOG" id="COG0318">
    <property type="taxonomic scope" value="Bacteria"/>
</dbReference>
<dbReference type="HOGENOM" id="CLU_000022_59_8_6"/>
<dbReference type="OMA" id="ANWVYLE"/>
<dbReference type="Proteomes" id="UP000000558">
    <property type="component" value="Chromosome"/>
</dbReference>
<dbReference type="Proteomes" id="UP000002519">
    <property type="component" value="Chromosome"/>
</dbReference>
<dbReference type="GO" id="GO:0005886">
    <property type="term" value="C:plasma membrane"/>
    <property type="evidence" value="ECO:0007669"/>
    <property type="project" value="UniProtKB-SubCell"/>
</dbReference>
<dbReference type="GO" id="GO:0008779">
    <property type="term" value="F:acyl-[acyl-carrier-protein]-phospholipid O-acyltransferase activity"/>
    <property type="evidence" value="ECO:0007669"/>
    <property type="project" value="UniProtKB-UniRule"/>
</dbReference>
<dbReference type="GO" id="GO:0005524">
    <property type="term" value="F:ATP binding"/>
    <property type="evidence" value="ECO:0007669"/>
    <property type="project" value="UniProtKB-KW"/>
</dbReference>
<dbReference type="GO" id="GO:0008922">
    <property type="term" value="F:long-chain fatty acid [acyl-carrier-protein] ligase activity"/>
    <property type="evidence" value="ECO:0007669"/>
    <property type="project" value="UniProtKB-UniRule"/>
</dbReference>
<dbReference type="GO" id="GO:0031956">
    <property type="term" value="F:medium-chain fatty acid-CoA ligase activity"/>
    <property type="evidence" value="ECO:0007669"/>
    <property type="project" value="TreeGrafter"/>
</dbReference>
<dbReference type="GO" id="GO:0006631">
    <property type="term" value="P:fatty acid metabolic process"/>
    <property type="evidence" value="ECO:0007669"/>
    <property type="project" value="InterPro"/>
</dbReference>
<dbReference type="GO" id="GO:0008654">
    <property type="term" value="P:phospholipid biosynthetic process"/>
    <property type="evidence" value="ECO:0007669"/>
    <property type="project" value="InterPro"/>
</dbReference>
<dbReference type="CDD" id="cd05909">
    <property type="entry name" value="AAS_C"/>
    <property type="match status" value="1"/>
</dbReference>
<dbReference type="CDD" id="cd07989">
    <property type="entry name" value="LPLAT_AGPAT-like"/>
    <property type="match status" value="1"/>
</dbReference>
<dbReference type="FunFam" id="3.30.300.30:FF:000009">
    <property type="entry name" value="Bifunctional protein Aas"/>
    <property type="match status" value="1"/>
</dbReference>
<dbReference type="FunFam" id="3.40.50.12780:FF:000009">
    <property type="entry name" value="Bifunctional protein Aas"/>
    <property type="match status" value="1"/>
</dbReference>
<dbReference type="Gene3D" id="3.30.300.30">
    <property type="match status" value="1"/>
</dbReference>
<dbReference type="Gene3D" id="3.40.50.12780">
    <property type="entry name" value="N-terminal domain of ligase-like"/>
    <property type="match status" value="1"/>
</dbReference>
<dbReference type="HAMAP" id="MF_01162">
    <property type="entry name" value="Aas"/>
    <property type="match status" value="1"/>
</dbReference>
<dbReference type="InterPro" id="IPR023775">
    <property type="entry name" value="Aas"/>
</dbReference>
<dbReference type="InterPro" id="IPR045851">
    <property type="entry name" value="AMP-bd_C_sf"/>
</dbReference>
<dbReference type="InterPro" id="IPR020845">
    <property type="entry name" value="AMP-binding_CS"/>
</dbReference>
<dbReference type="InterPro" id="IPR000873">
    <property type="entry name" value="AMP-dep_synth/lig_dom"/>
</dbReference>
<dbReference type="InterPro" id="IPR042099">
    <property type="entry name" value="ANL_N_sf"/>
</dbReference>
<dbReference type="InterPro" id="IPR002123">
    <property type="entry name" value="Plipid/glycerol_acylTrfase"/>
</dbReference>
<dbReference type="NCBIfam" id="NF005959">
    <property type="entry name" value="PRK08043.1"/>
    <property type="match status" value="1"/>
</dbReference>
<dbReference type="PANTHER" id="PTHR43201">
    <property type="entry name" value="ACYL-COA SYNTHETASE"/>
    <property type="match status" value="1"/>
</dbReference>
<dbReference type="PANTHER" id="PTHR43201:SF8">
    <property type="entry name" value="ACYL-COA SYNTHETASE FAMILY MEMBER 3"/>
    <property type="match status" value="1"/>
</dbReference>
<dbReference type="Pfam" id="PF01553">
    <property type="entry name" value="Acyltransferase"/>
    <property type="match status" value="1"/>
</dbReference>
<dbReference type="Pfam" id="PF00501">
    <property type="entry name" value="AMP-binding"/>
    <property type="match status" value="1"/>
</dbReference>
<dbReference type="SMART" id="SM00563">
    <property type="entry name" value="PlsC"/>
    <property type="match status" value="1"/>
</dbReference>
<dbReference type="SUPFAM" id="SSF56801">
    <property type="entry name" value="Acetyl-CoA synthetase-like"/>
    <property type="match status" value="1"/>
</dbReference>
<dbReference type="SUPFAM" id="SSF69593">
    <property type="entry name" value="Glycerol-3-phosphate (1)-acyltransferase"/>
    <property type="match status" value="1"/>
</dbReference>
<dbReference type="PROSITE" id="PS00455">
    <property type="entry name" value="AMP_BINDING"/>
    <property type="match status" value="1"/>
</dbReference>
<keyword id="KW-0012">Acyltransferase</keyword>
<keyword id="KW-0067">ATP-binding</keyword>
<keyword id="KW-0997">Cell inner membrane</keyword>
<keyword id="KW-1003">Cell membrane</keyword>
<keyword id="KW-0436">Ligase</keyword>
<keyword id="KW-0472">Membrane</keyword>
<keyword id="KW-0511">Multifunctional enzyme</keyword>
<keyword id="KW-0547">Nucleotide-binding</keyword>
<keyword id="KW-1185">Reference proteome</keyword>
<keyword id="KW-0808">Transferase</keyword>
<keyword id="KW-0812">Transmembrane</keyword>
<keyword id="KW-1133">Transmembrane helix</keyword>